<comment type="function">
    <text evidence="1 2">Electroneutral transporter of the plasma membrane mediating the cellular uptake of the divalent metal cations zinc, manganese and iron that are important for tissue homeostasis, metabolism, development and immunity (By similarity). Functions as an energy-dependent symporter, transporting through the membranes an electroneutral complex composed of a divalent metal cation and two bicarbonate anions. Beside these endogenous cellular substrates, can also import cadmium a non-essential metal which is cytotoxic and carcinogenic (By similarity).</text>
</comment>
<comment type="catalytic activity">
    <reaction evidence="2">
        <text>Zn(2+)(out) + 2 hydrogencarbonate(out) = Zn(2+)(in) + 2 hydrogencarbonate(in)</text>
        <dbReference type="Rhea" id="RHEA:62252"/>
        <dbReference type="ChEBI" id="CHEBI:17544"/>
        <dbReference type="ChEBI" id="CHEBI:29105"/>
    </reaction>
    <physiologicalReaction direction="left-to-right" evidence="2">
        <dbReference type="Rhea" id="RHEA:62253"/>
    </physiologicalReaction>
</comment>
<comment type="catalytic activity">
    <reaction evidence="2">
        <text>Mn(2+)(out) + 2 hydrogencarbonate(out) = Mn(2+)(in) + 2 hydrogencarbonate(in)</text>
        <dbReference type="Rhea" id="RHEA:62260"/>
        <dbReference type="ChEBI" id="CHEBI:17544"/>
        <dbReference type="ChEBI" id="CHEBI:29035"/>
    </reaction>
    <physiologicalReaction direction="left-to-right" evidence="2">
        <dbReference type="Rhea" id="RHEA:62261"/>
    </physiologicalReaction>
</comment>
<comment type="catalytic activity">
    <reaction evidence="2">
        <text>Fe(2+)(out) + 2 hydrogencarbonate(out) = Fe(2+)(in) + 2 hydrogencarbonate(in)</text>
        <dbReference type="Rhea" id="RHEA:62368"/>
        <dbReference type="ChEBI" id="CHEBI:17544"/>
        <dbReference type="ChEBI" id="CHEBI:29033"/>
    </reaction>
    <physiologicalReaction direction="left-to-right" evidence="2">
        <dbReference type="Rhea" id="RHEA:62369"/>
    </physiologicalReaction>
</comment>
<comment type="catalytic activity">
    <reaction evidence="2">
        <text>Cd(2+)(out) + 2 hydrogencarbonate(out) = Cd(2+)(in) + 2 hydrogencarbonate(in)</text>
        <dbReference type="Rhea" id="RHEA:62256"/>
        <dbReference type="ChEBI" id="CHEBI:17544"/>
        <dbReference type="ChEBI" id="CHEBI:48775"/>
    </reaction>
    <physiologicalReaction direction="left-to-right" evidence="2">
        <dbReference type="Rhea" id="RHEA:62257"/>
    </physiologicalReaction>
</comment>
<comment type="subunit">
    <text evidence="1">Homotrimer.</text>
</comment>
<comment type="subcellular location">
    <subcellularLocation>
        <location evidence="1">Cell membrane</location>
        <topology evidence="3">Multi-pass membrane protein</topology>
    </subcellularLocation>
    <subcellularLocation>
        <location evidence="1">Apical cell membrane</location>
        <topology evidence="3">Multi-pass membrane protein</topology>
    </subcellularLocation>
    <subcellularLocation>
        <location evidence="1">Basolateral cell membrane</location>
        <topology evidence="3">Multi-pass membrane protein</topology>
    </subcellularLocation>
    <subcellularLocation>
        <location evidence="1">Early endosome membrane</location>
        <topology evidence="3">Multi-pass membrane protein</topology>
    </subcellularLocation>
    <subcellularLocation>
        <location evidence="1">Late endosome membrane</location>
        <topology evidence="3">Multi-pass membrane protein</topology>
    </subcellularLocation>
    <subcellularLocation>
        <location evidence="1">Lysosome membrane</location>
        <topology evidence="3">Multi-pass membrane protein</topology>
    </subcellularLocation>
</comment>
<comment type="PTM">
    <text evidence="1">Ubiquitinated. Ubiquitination occurs upon iron depletion. The ubiquitinated form undergoes proteasomal degradation.</text>
</comment>
<comment type="PTM">
    <text evidence="1">N-glycosylated. N-glycosylation at Asn-100 is required for iron-regulated extraction of the transporter from membranes and subsequent proteasomal degradation.</text>
</comment>
<comment type="similarity">
    <text evidence="5">Belongs to the ZIP transporter (TC 2.A.5) family.</text>
</comment>
<keyword id="KW-1003">Cell membrane</keyword>
<keyword id="KW-0967">Endosome</keyword>
<keyword id="KW-0325">Glycoprotein</keyword>
<keyword id="KW-0406">Ion transport</keyword>
<keyword id="KW-0458">Lysosome</keyword>
<keyword id="KW-0472">Membrane</keyword>
<keyword id="KW-1185">Reference proteome</keyword>
<keyword id="KW-0732">Signal</keyword>
<keyword id="KW-0812">Transmembrane</keyword>
<keyword id="KW-1133">Transmembrane helix</keyword>
<keyword id="KW-0813">Transport</keyword>
<keyword id="KW-0832">Ubl conjugation</keyword>
<keyword id="KW-0862">Zinc</keyword>
<keyword id="KW-0864">Zinc transport</keyword>
<accession>A5D7L5</accession>
<proteinExistence type="evidence at transcript level"/>
<name>S39AE_BOVIN</name>
<feature type="signal peptide" evidence="3">
    <location>
        <begin position="1"/>
        <end position="28"/>
    </location>
</feature>
<feature type="chain" id="PRO_0000312193" description="Metal cation symporter ZIP14">
    <location>
        <begin position="29"/>
        <end position="490"/>
    </location>
</feature>
<feature type="topological domain" description="Extracellular" evidence="3">
    <location>
        <begin position="29"/>
        <end position="155"/>
    </location>
</feature>
<feature type="transmembrane region" description="Helical" evidence="3">
    <location>
        <begin position="156"/>
        <end position="176"/>
    </location>
</feature>
<feature type="topological domain" description="Cytoplasmic" evidence="3">
    <location>
        <begin position="177"/>
        <end position="184"/>
    </location>
</feature>
<feature type="transmembrane region" description="Helical" evidence="3">
    <location>
        <begin position="185"/>
        <end position="205"/>
    </location>
</feature>
<feature type="topological domain" description="Extracellular" evidence="3">
    <location>
        <begin position="206"/>
        <end position="222"/>
    </location>
</feature>
<feature type="transmembrane region" description="Helical" evidence="3">
    <location>
        <begin position="223"/>
        <end position="243"/>
    </location>
</feature>
<feature type="topological domain" description="Cytoplasmic" evidence="3">
    <location>
        <begin position="244"/>
        <end position="395"/>
    </location>
</feature>
<feature type="transmembrane region" description="Helical" evidence="3">
    <location>
        <begin position="396"/>
        <end position="416"/>
    </location>
</feature>
<feature type="topological domain" description="Extracellular" evidence="3">
    <location>
        <begin position="417"/>
        <end position="422"/>
    </location>
</feature>
<feature type="transmembrane region" description="Helical" evidence="3">
    <location>
        <begin position="423"/>
        <end position="443"/>
    </location>
</feature>
<feature type="topological domain" description="Cytoplasmic" evidence="3">
    <location>
        <begin position="444"/>
        <end position="459"/>
    </location>
</feature>
<feature type="transmembrane region" description="Helical" evidence="3">
    <location>
        <begin position="460"/>
        <end position="480"/>
    </location>
</feature>
<feature type="topological domain" description="Extracellular" evidence="3">
    <location>
        <begin position="481"/>
        <end position="490"/>
    </location>
</feature>
<feature type="region of interest" description="Disordered" evidence="4">
    <location>
        <begin position="127"/>
        <end position="146"/>
    </location>
</feature>
<feature type="short sequence motif" description="HHHGHXHX-motif" evidence="1">
    <location>
        <begin position="249"/>
        <end position="256"/>
    </location>
</feature>
<feature type="short sequence motif" description="XEXPHE-motif" evidence="1">
    <location>
        <begin position="374"/>
        <end position="379"/>
    </location>
</feature>
<feature type="glycosylation site" description="N-linked (GlcNAc...) asparagine" evidence="3">
    <location>
        <position position="75"/>
    </location>
</feature>
<feature type="glycosylation site" description="N-linked (GlcNAc...) asparagine" evidence="3">
    <location>
        <position position="85"/>
    </location>
</feature>
<feature type="glycosylation site" description="N-linked (GlcNAc...) asparagine" evidence="3">
    <location>
        <position position="100"/>
    </location>
</feature>
<gene>
    <name evidence="1" type="primary">SLC39A14</name>
</gene>
<reference key="1">
    <citation type="submission" date="2007-04" db="EMBL/GenBank/DDBJ databases">
        <authorList>
            <consortium name="NIH - Mammalian Gene Collection (MGC) project"/>
        </authorList>
    </citation>
    <scope>NUCLEOTIDE SEQUENCE [LARGE SCALE MRNA]</scope>
    <source>
        <strain>Hereford</strain>
        <tissue>Fetal skin</tissue>
    </source>
</reference>
<sequence length="490" mass="53934">MELLRPALPSYFLLTLLSIWTAASEARAVSTGMPTISAASFLQNLMHRYGEGDSLTLQQLKALLNHLDVGVGRGNISQPVQGPRNLSTCFSSGELFAAHNLSHQSQIGEREFQEFCPTILQQLDSRACSSENQENEENEQTEEGRPSSVEVWGYGLLCVTVISLCSLLGASVVPFMKKTFYKRLLLYFIALAIGTLYSNALFQLIPEAFGFNPMEDYYVSKSAVVFGGFYLFFFTEKILKMLLKQKNEHHHGHSHYTSETLPSQKDQEEGVTEKLQNGDLDHMIPQHCSGELDGKTPVVDEKVIVGSLSVQDLQASQSACHWLKGVRYSDIGTLAWMITLSDGLHNFIDGLAIGASFTVSVFQGISTSVAILCEEFPHELGDFVILLNAGMSLQQALFFNFLSACCCYVGLGFGILAGSHFSANWIFALAGGMFLYISLADMFPEMNEVSQEDERKGSALIPFVIQNLGLLTGFGIMLVLTMYSGHIQIG</sequence>
<protein>
    <recommendedName>
        <fullName evidence="1">Metal cation symporter ZIP14</fullName>
    </recommendedName>
    <alternativeName>
        <fullName evidence="1">Solute carrier family 39 member 14</fullName>
    </alternativeName>
    <alternativeName>
        <fullName evidence="1">Zrt- and Irt-like protein 14</fullName>
        <shortName evidence="1">ZIP-14</shortName>
    </alternativeName>
</protein>
<organism>
    <name type="scientific">Bos taurus</name>
    <name type="common">Bovine</name>
    <dbReference type="NCBI Taxonomy" id="9913"/>
    <lineage>
        <taxon>Eukaryota</taxon>
        <taxon>Metazoa</taxon>
        <taxon>Chordata</taxon>
        <taxon>Craniata</taxon>
        <taxon>Vertebrata</taxon>
        <taxon>Euteleostomi</taxon>
        <taxon>Mammalia</taxon>
        <taxon>Eutheria</taxon>
        <taxon>Laurasiatheria</taxon>
        <taxon>Artiodactyla</taxon>
        <taxon>Ruminantia</taxon>
        <taxon>Pecora</taxon>
        <taxon>Bovidae</taxon>
        <taxon>Bovinae</taxon>
        <taxon>Bos</taxon>
    </lineage>
</organism>
<evidence type="ECO:0000250" key="1">
    <source>
        <dbReference type="UniProtKB" id="Q15043"/>
    </source>
</evidence>
<evidence type="ECO:0000250" key="2">
    <source>
        <dbReference type="UniProtKB" id="Q75N73"/>
    </source>
</evidence>
<evidence type="ECO:0000255" key="3"/>
<evidence type="ECO:0000256" key="4">
    <source>
        <dbReference type="SAM" id="MobiDB-lite"/>
    </source>
</evidence>
<evidence type="ECO:0000305" key="5"/>
<dbReference type="EMBL" id="BC140602">
    <property type="protein sequence ID" value="AAI40603.1"/>
    <property type="molecule type" value="mRNA"/>
</dbReference>
<dbReference type="RefSeq" id="NP_001091505.1">
    <property type="nucleotide sequence ID" value="NM_001098036.1"/>
</dbReference>
<dbReference type="RefSeq" id="XP_005210309.1">
    <property type="nucleotide sequence ID" value="XM_005210252.5"/>
</dbReference>
<dbReference type="SMR" id="A5D7L5"/>
<dbReference type="FunCoup" id="A5D7L5">
    <property type="interactions" value="229"/>
</dbReference>
<dbReference type="STRING" id="9913.ENSBTAP00000025599"/>
<dbReference type="GlyCosmos" id="A5D7L5">
    <property type="glycosylation" value="3 sites, No reported glycans"/>
</dbReference>
<dbReference type="GlyGen" id="A5D7L5">
    <property type="glycosylation" value="3 sites"/>
</dbReference>
<dbReference type="PaxDb" id="9913-ENSBTAP00000025599"/>
<dbReference type="PeptideAtlas" id="A5D7L5"/>
<dbReference type="GeneID" id="515437"/>
<dbReference type="KEGG" id="bta:515437"/>
<dbReference type="CTD" id="23516"/>
<dbReference type="VEuPathDB" id="HostDB:ENSBTAG00000019225"/>
<dbReference type="eggNOG" id="KOG2693">
    <property type="taxonomic scope" value="Eukaryota"/>
</dbReference>
<dbReference type="HOGENOM" id="CLU_015114_13_0_1"/>
<dbReference type="InParanoid" id="A5D7L5"/>
<dbReference type="OrthoDB" id="200954at2759"/>
<dbReference type="TreeFam" id="TF318470"/>
<dbReference type="Reactome" id="R-BTA-442380">
    <property type="pathway name" value="Zinc influx into cells by the SLC39 gene family"/>
</dbReference>
<dbReference type="Proteomes" id="UP000009136">
    <property type="component" value="Chromosome 8"/>
</dbReference>
<dbReference type="Bgee" id="ENSBTAG00000019225">
    <property type="expression patterns" value="Expressed in liver and 103 other cell types or tissues"/>
</dbReference>
<dbReference type="GO" id="GO:0016324">
    <property type="term" value="C:apical plasma membrane"/>
    <property type="evidence" value="ECO:0000250"/>
    <property type="project" value="UniProtKB"/>
</dbReference>
<dbReference type="GO" id="GO:0016323">
    <property type="term" value="C:basolateral plasma membrane"/>
    <property type="evidence" value="ECO:0000250"/>
    <property type="project" value="UniProtKB"/>
</dbReference>
<dbReference type="GO" id="GO:0031901">
    <property type="term" value="C:early endosome membrane"/>
    <property type="evidence" value="ECO:0000250"/>
    <property type="project" value="UniProtKB"/>
</dbReference>
<dbReference type="GO" id="GO:0031902">
    <property type="term" value="C:late endosome membrane"/>
    <property type="evidence" value="ECO:0000250"/>
    <property type="project" value="UniProtKB"/>
</dbReference>
<dbReference type="GO" id="GO:0005765">
    <property type="term" value="C:lysosomal membrane"/>
    <property type="evidence" value="ECO:0000250"/>
    <property type="project" value="UniProtKB"/>
</dbReference>
<dbReference type="GO" id="GO:0005886">
    <property type="term" value="C:plasma membrane"/>
    <property type="evidence" value="ECO:0000250"/>
    <property type="project" value="UniProtKB"/>
</dbReference>
<dbReference type="GO" id="GO:0015086">
    <property type="term" value="F:cadmium ion transmembrane transporter activity"/>
    <property type="evidence" value="ECO:0000250"/>
    <property type="project" value="UniProtKB"/>
</dbReference>
<dbReference type="GO" id="GO:0005381">
    <property type="term" value="F:iron ion transmembrane transporter activity"/>
    <property type="evidence" value="ECO:0000250"/>
    <property type="project" value="UniProtKB"/>
</dbReference>
<dbReference type="GO" id="GO:0005384">
    <property type="term" value="F:manganese ion transmembrane transporter activity"/>
    <property type="evidence" value="ECO:0000250"/>
    <property type="project" value="UniProtKB"/>
</dbReference>
<dbReference type="GO" id="GO:0015296">
    <property type="term" value="F:monoatomic anion:monoatomic cation symporter activity"/>
    <property type="evidence" value="ECO:0000250"/>
    <property type="project" value="UniProtKB"/>
</dbReference>
<dbReference type="GO" id="GO:0140410">
    <property type="term" value="F:monoatomic cation:bicarbonate symporter activity"/>
    <property type="evidence" value="ECO:0000318"/>
    <property type="project" value="GO_Central"/>
</dbReference>
<dbReference type="GO" id="GO:0005385">
    <property type="term" value="F:zinc ion transmembrane transporter activity"/>
    <property type="evidence" value="ECO:0000250"/>
    <property type="project" value="UniProtKB"/>
</dbReference>
<dbReference type="GO" id="GO:0071333">
    <property type="term" value="P:cellular response to glucose stimulus"/>
    <property type="evidence" value="ECO:0000250"/>
    <property type="project" value="UniProtKB"/>
</dbReference>
<dbReference type="GO" id="GO:0032869">
    <property type="term" value="P:cellular response to insulin stimulus"/>
    <property type="evidence" value="ECO:0000250"/>
    <property type="project" value="UniProtKB"/>
</dbReference>
<dbReference type="GO" id="GO:0098739">
    <property type="term" value="P:import across plasma membrane"/>
    <property type="evidence" value="ECO:0000250"/>
    <property type="project" value="UniProtKB"/>
</dbReference>
<dbReference type="GO" id="GO:0098662">
    <property type="term" value="P:inorganic cation transmembrane transport"/>
    <property type="evidence" value="ECO:0000250"/>
    <property type="project" value="UniProtKB"/>
</dbReference>
<dbReference type="GO" id="GO:0030003">
    <property type="term" value="P:intracellular monoatomic cation homeostasis"/>
    <property type="evidence" value="ECO:0000318"/>
    <property type="project" value="GO_Central"/>
</dbReference>
<dbReference type="GO" id="GO:0006882">
    <property type="term" value="P:intracellular zinc ion homeostasis"/>
    <property type="evidence" value="ECO:0000250"/>
    <property type="project" value="UniProtKB"/>
</dbReference>
<dbReference type="GO" id="GO:0033212">
    <property type="term" value="P:iron import into cell"/>
    <property type="evidence" value="ECO:0000250"/>
    <property type="project" value="UniProtKB"/>
</dbReference>
<dbReference type="GO" id="GO:0034755">
    <property type="term" value="P:iron ion transmembrane transport"/>
    <property type="evidence" value="ECO:0000250"/>
    <property type="project" value="UniProtKB"/>
</dbReference>
<dbReference type="GO" id="GO:0055071">
    <property type="term" value="P:manganese ion homeostasis"/>
    <property type="evidence" value="ECO:0000250"/>
    <property type="project" value="UniProtKB"/>
</dbReference>
<dbReference type="GO" id="GO:0071421">
    <property type="term" value="P:manganese ion transmembrane transport"/>
    <property type="evidence" value="ECO:0000250"/>
    <property type="project" value="UniProtKB"/>
</dbReference>
<dbReference type="GO" id="GO:0045745">
    <property type="term" value="P:positive regulation of G protein-coupled receptor signaling pathway"/>
    <property type="evidence" value="ECO:0000250"/>
    <property type="project" value="UniProtKB"/>
</dbReference>
<dbReference type="GO" id="GO:0071578">
    <property type="term" value="P:zinc ion import across plasma membrane"/>
    <property type="evidence" value="ECO:0000250"/>
    <property type="project" value="UniProtKB"/>
</dbReference>
<dbReference type="GO" id="GO:0071577">
    <property type="term" value="P:zinc ion transmembrane transport"/>
    <property type="evidence" value="ECO:0000250"/>
    <property type="project" value="UniProtKB"/>
</dbReference>
<dbReference type="InterPro" id="IPR003689">
    <property type="entry name" value="ZIP"/>
</dbReference>
<dbReference type="InterPro" id="IPR050799">
    <property type="entry name" value="ZIP_Transporter"/>
</dbReference>
<dbReference type="PANTHER" id="PTHR12191:SF5">
    <property type="entry name" value="METAL CATION SYMPORTER ZIP14"/>
    <property type="match status" value="1"/>
</dbReference>
<dbReference type="PANTHER" id="PTHR12191">
    <property type="entry name" value="SOLUTE CARRIER FAMILY 39"/>
    <property type="match status" value="1"/>
</dbReference>
<dbReference type="Pfam" id="PF02535">
    <property type="entry name" value="Zip"/>
    <property type="match status" value="1"/>
</dbReference>